<reference key="1">
    <citation type="journal article" date="1998" name="Nature">
        <title>Deciphering the biology of Mycobacterium tuberculosis from the complete genome sequence.</title>
        <authorList>
            <person name="Cole S.T."/>
            <person name="Brosch R."/>
            <person name="Parkhill J."/>
            <person name="Garnier T."/>
            <person name="Churcher C.M."/>
            <person name="Harris D.E."/>
            <person name="Gordon S.V."/>
            <person name="Eiglmeier K."/>
            <person name="Gas S."/>
            <person name="Barry C.E. III"/>
            <person name="Tekaia F."/>
            <person name="Badcock K."/>
            <person name="Basham D."/>
            <person name="Brown D."/>
            <person name="Chillingworth T."/>
            <person name="Connor R."/>
            <person name="Davies R.M."/>
            <person name="Devlin K."/>
            <person name="Feltwell T."/>
            <person name="Gentles S."/>
            <person name="Hamlin N."/>
            <person name="Holroyd S."/>
            <person name="Hornsby T."/>
            <person name="Jagels K."/>
            <person name="Krogh A."/>
            <person name="McLean J."/>
            <person name="Moule S."/>
            <person name="Murphy L.D."/>
            <person name="Oliver S."/>
            <person name="Osborne J."/>
            <person name="Quail M.A."/>
            <person name="Rajandream M.A."/>
            <person name="Rogers J."/>
            <person name="Rutter S."/>
            <person name="Seeger K."/>
            <person name="Skelton S."/>
            <person name="Squares S."/>
            <person name="Squares R."/>
            <person name="Sulston J.E."/>
            <person name="Taylor K."/>
            <person name="Whitehead S."/>
            <person name="Barrell B.G."/>
        </authorList>
    </citation>
    <scope>NUCLEOTIDE SEQUENCE [LARGE SCALE GENOMIC DNA]</scope>
    <source>
        <strain>ATCC 25618 / H37Rv</strain>
    </source>
</reference>
<reference key="2">
    <citation type="journal article" date="2017" name="MBio">
        <title>Catabolism of the last two steroid rings in Mycobacterium tuberculosis and other bacteria.</title>
        <authorList>
            <person name="Crowe A.M."/>
            <person name="Casabon I."/>
            <person name="Brown K.L."/>
            <person name="Liu J."/>
            <person name="Lian J."/>
            <person name="Rogalski J.C."/>
            <person name="Hurst T.E."/>
            <person name="Snieckus V."/>
            <person name="Foster L.J."/>
            <person name="Eltis L.D."/>
        </authorList>
    </citation>
    <scope>FUNCTION</scope>
    <scope>CATALYTIC ACTIVITY</scope>
    <scope>ACTIVITY REGULATION</scope>
    <scope>PATHWAY</scope>
    <scope>DISRUPTION PHENOTYPE</scope>
    <source>
        <strain>Erdman</strain>
    </source>
</reference>
<accession>P71847</accession>
<accession>F2GER3</accession>
<accession>I6X7M5</accession>
<name>IPDC_MYCTU</name>
<proteinExistence type="evidence at protein level"/>
<organism>
    <name type="scientific">Mycobacterium tuberculosis (strain ATCC 25618 / H37Rv)</name>
    <dbReference type="NCBI Taxonomy" id="83332"/>
    <lineage>
        <taxon>Bacteria</taxon>
        <taxon>Bacillati</taxon>
        <taxon>Actinomycetota</taxon>
        <taxon>Actinomycetes</taxon>
        <taxon>Mycobacteriales</taxon>
        <taxon>Mycobacteriaceae</taxon>
        <taxon>Mycobacterium</taxon>
        <taxon>Mycobacterium tuberculosis complex</taxon>
    </lineage>
</organism>
<feature type="chain" id="PRO_0000452307" description="(3aS,4S,5R,7aS)-5-hydroxy-7a-methyl-1-oxo-octahydro-1H-indene-4-carboxyl-CoA dehydrogenase">
    <location>
        <begin position="1"/>
        <end position="355"/>
    </location>
</feature>
<feature type="binding site" evidence="1">
    <location>
        <begin position="21"/>
        <end position="23"/>
    </location>
    <ligand>
        <name>FMN</name>
        <dbReference type="ChEBI" id="CHEBI:58210"/>
    </ligand>
</feature>
<feature type="binding site" evidence="1">
    <location>
        <begin position="173"/>
        <end position="175"/>
    </location>
    <ligand>
        <name>FMN</name>
        <dbReference type="ChEBI" id="CHEBI:58210"/>
    </ligand>
</feature>
<feature type="binding site" evidence="1">
    <location>
        <begin position="196"/>
        <end position="197"/>
    </location>
    <ligand>
        <name>FMN</name>
        <dbReference type="ChEBI" id="CHEBI:58210"/>
    </ligand>
</feature>
<comment type="function">
    <text evidence="2 5">Involved in the final steps of cholesterol and steroid degradation (PubMed:28377529). Probably catalyzes the introduction of a double bound into the C ring of 5OH-HIC-CoA, leading to the formation of (5R,7aS)-5-hydroxy-7a-methyl-1-oxo-3,5,6,7-tetrahydro-2H-indene-4-carboxyl-CoA (Probable).</text>
</comment>
<comment type="catalytic activity">
    <reaction evidence="5">
        <text>(3aS,4S,5R,7aS)-5-hydroxy-7a-methyl-1-oxo-octahydro-1H-indene-4-carboxyl-CoA + NAD(+) = (5R,7aS)-5-hydroxy-7a-methyl-1-oxo-2,3,5,6,7,7a-hexahydro-1H-indene-carboxyl-CoA + NADH + H(+)</text>
        <dbReference type="Rhea" id="RHEA:66352"/>
        <dbReference type="ChEBI" id="CHEBI:15378"/>
        <dbReference type="ChEBI" id="CHEBI:57540"/>
        <dbReference type="ChEBI" id="CHEBI:57945"/>
        <dbReference type="ChEBI" id="CHEBI:167058"/>
        <dbReference type="ChEBI" id="CHEBI:167096"/>
    </reaction>
    <physiologicalReaction direction="left-to-right" evidence="5">
        <dbReference type="Rhea" id="RHEA:66353"/>
    </physiologicalReaction>
</comment>
<comment type="activity regulation">
    <text evidence="5">Requires the presence of IpdF.</text>
</comment>
<comment type="pathway">
    <text evidence="2">Steroid metabolism; cholesterol degradation.</text>
</comment>
<comment type="disruption phenotype">
    <text evidence="2">Deletion mutant does not grow on cholesterol, but grows as the wild-type on glycerol. In the presence of cholesterol, disruption mutant accumulates 5OH-HIC-CoA.</text>
</comment>
<comment type="similarity">
    <text evidence="4">Belongs to the nitronate monooxygenase family.</text>
</comment>
<evidence type="ECO:0000250" key="1">
    <source>
        <dbReference type="UniProtKB" id="Q9I4V0"/>
    </source>
</evidence>
<evidence type="ECO:0000269" key="2">
    <source>
    </source>
</evidence>
<evidence type="ECO:0000303" key="3">
    <source>
    </source>
</evidence>
<evidence type="ECO:0000305" key="4"/>
<evidence type="ECO:0000305" key="5">
    <source>
    </source>
</evidence>
<evidence type="ECO:0000312" key="6">
    <source>
        <dbReference type="EMBL" id="CCP46375.1"/>
    </source>
</evidence>
<protein>
    <recommendedName>
        <fullName evidence="4">(3aS,4S,5R,7aS)-5-hydroxy-7a-methyl-1-oxo-octahydro-1H-indene-4-carboxyl-CoA dehydrogenase</fullName>
        <shortName evidence="4">5OH-HIC-CoA dehydrogenase</shortName>
        <ecNumber evidence="5">1.3.1.-</ecNumber>
    </recommendedName>
</protein>
<gene>
    <name evidence="3" type="primary">ipdC</name>
    <name evidence="6" type="ordered locus">Rv3553</name>
</gene>
<dbReference type="EC" id="1.3.1.-" evidence="5"/>
<dbReference type="EMBL" id="AL123456">
    <property type="protein sequence ID" value="CCP46375.1"/>
    <property type="molecule type" value="Genomic_DNA"/>
</dbReference>
<dbReference type="RefSeq" id="NP_218070.1">
    <property type="nucleotide sequence ID" value="NC_000962.3"/>
</dbReference>
<dbReference type="RefSeq" id="WP_003419324.1">
    <property type="nucleotide sequence ID" value="NZ_NVQJ01000014.1"/>
</dbReference>
<dbReference type="SMR" id="P71847"/>
<dbReference type="STRING" id="83332.Rv3553"/>
<dbReference type="PaxDb" id="83332-Rv3553"/>
<dbReference type="DNASU" id="887190"/>
<dbReference type="GeneID" id="45427537"/>
<dbReference type="GeneID" id="887190"/>
<dbReference type="KEGG" id="mtu:Rv3553"/>
<dbReference type="KEGG" id="mtv:RVBD_3553"/>
<dbReference type="PATRIC" id="fig|83332.111.peg.3958"/>
<dbReference type="TubercuList" id="Rv3553"/>
<dbReference type="eggNOG" id="COG2070">
    <property type="taxonomic scope" value="Bacteria"/>
</dbReference>
<dbReference type="InParanoid" id="P71847"/>
<dbReference type="OrthoDB" id="9778912at2"/>
<dbReference type="PhylomeDB" id="P71847"/>
<dbReference type="BioCyc" id="MetaCyc:G185E-7830-MONOMER"/>
<dbReference type="UniPathway" id="UPA01058"/>
<dbReference type="Proteomes" id="UP000001584">
    <property type="component" value="Chromosome"/>
</dbReference>
<dbReference type="GO" id="GO:0005886">
    <property type="term" value="C:plasma membrane"/>
    <property type="evidence" value="ECO:0007005"/>
    <property type="project" value="MTBBASE"/>
</dbReference>
<dbReference type="GO" id="GO:0018580">
    <property type="term" value="F:nitronate monooxygenase activity"/>
    <property type="evidence" value="ECO:0007669"/>
    <property type="project" value="InterPro"/>
</dbReference>
<dbReference type="GO" id="GO:0000166">
    <property type="term" value="F:nucleotide binding"/>
    <property type="evidence" value="ECO:0007669"/>
    <property type="project" value="UniProtKB-KW"/>
</dbReference>
<dbReference type="GO" id="GO:0006707">
    <property type="term" value="P:cholesterol catabolic process"/>
    <property type="evidence" value="ECO:0007669"/>
    <property type="project" value="UniProtKB-UniPathway"/>
</dbReference>
<dbReference type="CDD" id="cd04730">
    <property type="entry name" value="NPD_like"/>
    <property type="match status" value="1"/>
</dbReference>
<dbReference type="Gene3D" id="3.20.20.70">
    <property type="entry name" value="Aldolase class I"/>
    <property type="match status" value="1"/>
</dbReference>
<dbReference type="InterPro" id="IPR013785">
    <property type="entry name" value="Aldolase_TIM"/>
</dbReference>
<dbReference type="InterPro" id="IPR004136">
    <property type="entry name" value="NMO"/>
</dbReference>
<dbReference type="PANTHER" id="PTHR32332">
    <property type="entry name" value="2-NITROPROPANE DIOXYGENASE"/>
    <property type="match status" value="1"/>
</dbReference>
<dbReference type="PANTHER" id="PTHR32332:SF20">
    <property type="entry name" value="2-NITROPROPANE DIOXYGENASE-LIKE PROTEIN"/>
    <property type="match status" value="1"/>
</dbReference>
<dbReference type="Pfam" id="PF03060">
    <property type="entry name" value="NMO"/>
    <property type="match status" value="1"/>
</dbReference>
<dbReference type="SMART" id="SM01240">
    <property type="entry name" value="IMPDH"/>
    <property type="match status" value="1"/>
</dbReference>
<dbReference type="SUPFAM" id="SSF51412">
    <property type="entry name" value="Inosine monophosphate dehydrogenase (IMPDH)"/>
    <property type="match status" value="1"/>
</dbReference>
<keyword id="KW-0153">Cholesterol metabolism</keyword>
<keyword id="KW-0285">Flavoprotein</keyword>
<keyword id="KW-0288">FMN</keyword>
<keyword id="KW-0443">Lipid metabolism</keyword>
<keyword id="KW-0520">NAD</keyword>
<keyword id="KW-0547">Nucleotide-binding</keyword>
<keyword id="KW-0560">Oxidoreductase</keyword>
<keyword id="KW-1185">Reference proteome</keyword>
<keyword id="KW-0753">Steroid metabolism</keyword>
<keyword id="KW-1207">Sterol metabolism</keyword>
<sequence length="355" mass="36831">MRLRTPLTELIGIEHPVVQTGMGWVAGARLVSATANAGGLGILASATMTLDELAAAITKVKAVTDKPFGVNIRADAADAGDRVELMIREGVRVASFALAPKQQLIARLKEAGAVVIPSIGAAKHARKVAAWGADAMIVQGGEGGGHTGPVATTLLLPSVLDAVAGTGIPVIAAGGFFDGRGLAAALCYGAAGVAMGTRFLLTSDSTVPDAVKRRYLQAGLDGTVVTTRVDGMPHRVLRTELVEKLESGSRARGFAAALRNAGKFRRMSQMTWRSMIRDGLTMRHGKELTWSQVLMAANTPMLLKAGLVDGNTEAGVLASGQVAGILDDLPSCKELIESIVLDAITHLQTASALVE</sequence>